<reference key="1">
    <citation type="journal article" date="2004" name="Proc. Natl. Acad. Sci. U.S.A.">
        <title>Genome sequence of the enterobacterial phytopathogen Erwinia carotovora subsp. atroseptica and characterization of virulence factors.</title>
        <authorList>
            <person name="Bell K.S."/>
            <person name="Sebaihia M."/>
            <person name="Pritchard L."/>
            <person name="Holden M.T.G."/>
            <person name="Hyman L.J."/>
            <person name="Holeva M.C."/>
            <person name="Thomson N.R."/>
            <person name="Bentley S.D."/>
            <person name="Churcher L.J.C."/>
            <person name="Mungall K."/>
            <person name="Atkin R."/>
            <person name="Bason N."/>
            <person name="Brooks K."/>
            <person name="Chillingworth T."/>
            <person name="Clark K."/>
            <person name="Doggett J."/>
            <person name="Fraser A."/>
            <person name="Hance Z."/>
            <person name="Hauser H."/>
            <person name="Jagels K."/>
            <person name="Moule S."/>
            <person name="Norbertczak H."/>
            <person name="Ormond D."/>
            <person name="Price C."/>
            <person name="Quail M.A."/>
            <person name="Sanders M."/>
            <person name="Walker D."/>
            <person name="Whitehead S."/>
            <person name="Salmond G.P.C."/>
            <person name="Birch P.R.J."/>
            <person name="Parkhill J."/>
            <person name="Toth I.K."/>
        </authorList>
    </citation>
    <scope>NUCLEOTIDE SEQUENCE [LARGE SCALE GENOMIC DNA]</scope>
    <source>
        <strain>SCRI 1043 / ATCC BAA-672</strain>
    </source>
</reference>
<keyword id="KW-0997">Cell inner membrane</keyword>
<keyword id="KW-1003">Cell membrane</keyword>
<keyword id="KW-0249">Electron transport</keyword>
<keyword id="KW-0285">Flavoprotein</keyword>
<keyword id="KW-0288">FMN</keyword>
<keyword id="KW-0472">Membrane</keyword>
<keyword id="KW-0597">Phosphoprotein</keyword>
<keyword id="KW-1185">Reference proteome</keyword>
<keyword id="KW-1278">Translocase</keyword>
<keyword id="KW-0812">Transmembrane</keyword>
<keyword id="KW-1133">Transmembrane helix</keyword>
<keyword id="KW-0813">Transport</keyword>
<dbReference type="EC" id="7.-.-.-" evidence="1"/>
<dbReference type="EMBL" id="BX950851">
    <property type="protein sequence ID" value="CAG75183.1"/>
    <property type="molecule type" value="Genomic_DNA"/>
</dbReference>
<dbReference type="SMR" id="Q6D4W0"/>
<dbReference type="STRING" id="218491.ECA2280"/>
<dbReference type="DNASU" id="2885036"/>
<dbReference type="KEGG" id="eca:ECA2280"/>
<dbReference type="PATRIC" id="fig|218491.5.peg.2310"/>
<dbReference type="eggNOG" id="COG4659">
    <property type="taxonomic scope" value="Bacteria"/>
</dbReference>
<dbReference type="HOGENOM" id="CLU_077882_1_0_6"/>
<dbReference type="OrthoDB" id="9784165at2"/>
<dbReference type="Proteomes" id="UP000007966">
    <property type="component" value="Chromosome"/>
</dbReference>
<dbReference type="GO" id="GO:0005886">
    <property type="term" value="C:plasma membrane"/>
    <property type="evidence" value="ECO:0007669"/>
    <property type="project" value="UniProtKB-SubCell"/>
</dbReference>
<dbReference type="GO" id="GO:0009055">
    <property type="term" value="F:electron transfer activity"/>
    <property type="evidence" value="ECO:0007669"/>
    <property type="project" value="InterPro"/>
</dbReference>
<dbReference type="GO" id="GO:0010181">
    <property type="term" value="F:FMN binding"/>
    <property type="evidence" value="ECO:0007669"/>
    <property type="project" value="InterPro"/>
</dbReference>
<dbReference type="GO" id="GO:0022900">
    <property type="term" value="P:electron transport chain"/>
    <property type="evidence" value="ECO:0007669"/>
    <property type="project" value="UniProtKB-UniRule"/>
</dbReference>
<dbReference type="HAMAP" id="MF_00479">
    <property type="entry name" value="RsxG_RnfG"/>
    <property type="match status" value="1"/>
</dbReference>
<dbReference type="InterPro" id="IPR007329">
    <property type="entry name" value="FMN-bd"/>
</dbReference>
<dbReference type="InterPro" id="IPR010209">
    <property type="entry name" value="Ion_transpt_RnfG/RsxG"/>
</dbReference>
<dbReference type="NCBIfam" id="NF002519">
    <property type="entry name" value="PRK01908.1"/>
    <property type="match status" value="1"/>
</dbReference>
<dbReference type="NCBIfam" id="TIGR01947">
    <property type="entry name" value="rnfG"/>
    <property type="match status" value="1"/>
</dbReference>
<dbReference type="PANTHER" id="PTHR36118">
    <property type="entry name" value="ION-TRANSLOCATING OXIDOREDUCTASE COMPLEX SUBUNIT G"/>
    <property type="match status" value="1"/>
</dbReference>
<dbReference type="PANTHER" id="PTHR36118:SF1">
    <property type="entry name" value="ION-TRANSLOCATING OXIDOREDUCTASE COMPLEX SUBUNIT G"/>
    <property type="match status" value="1"/>
</dbReference>
<dbReference type="Pfam" id="PF04205">
    <property type="entry name" value="FMN_bind"/>
    <property type="match status" value="1"/>
</dbReference>
<dbReference type="PIRSF" id="PIRSF006091">
    <property type="entry name" value="E_trnsport_RnfG"/>
    <property type="match status" value="1"/>
</dbReference>
<dbReference type="SMART" id="SM00900">
    <property type="entry name" value="FMN_bind"/>
    <property type="match status" value="1"/>
</dbReference>
<organism>
    <name type="scientific">Pectobacterium atrosepticum (strain SCRI 1043 / ATCC BAA-672)</name>
    <name type="common">Erwinia carotovora subsp. atroseptica</name>
    <dbReference type="NCBI Taxonomy" id="218491"/>
    <lineage>
        <taxon>Bacteria</taxon>
        <taxon>Pseudomonadati</taxon>
        <taxon>Pseudomonadota</taxon>
        <taxon>Gammaproteobacteria</taxon>
        <taxon>Enterobacterales</taxon>
        <taxon>Pectobacteriaceae</taxon>
        <taxon>Pectobacterium</taxon>
    </lineage>
</organism>
<accession>Q6D4W0</accession>
<gene>
    <name evidence="1" type="primary">rnfG</name>
    <name type="ordered locus">ECA2280</name>
</gene>
<feature type="chain" id="PRO_1000014119" description="Ion-translocating oxidoreductase complex subunit G">
    <location>
        <begin position="1"/>
        <end position="209"/>
    </location>
</feature>
<feature type="transmembrane region" description="Helical" evidence="1">
    <location>
        <begin position="9"/>
        <end position="29"/>
    </location>
</feature>
<feature type="modified residue" description="FMN phosphoryl threonine" evidence="1">
    <location>
        <position position="175"/>
    </location>
</feature>
<protein>
    <recommendedName>
        <fullName evidence="1">Ion-translocating oxidoreductase complex subunit G</fullName>
        <ecNumber evidence="1">7.-.-.-</ecNumber>
    </recommendedName>
    <alternativeName>
        <fullName evidence="1">Rnf electron transport complex subunit G</fullName>
    </alternativeName>
</protein>
<sequence>MMTTMRRHATTLALFAASTTAVTAVVNMLTEPTISHQAMLQQKMLLDQVVPAELYNSDIQKECYVVTNPALGSSAPHRVFIARQNGEPVAAALESTAPDGYSGAIRLLVGADFHGKVLGVRVTEHHETPGLGDKIEVRISDWITRFNGLMVQGEHDARWAVKKEGGMFDQFTGATITPRAVINSVKRSALYLQTLPPQINTLSACGENQ</sequence>
<comment type="function">
    <text evidence="1">Part of a membrane-bound complex that couples electron transfer with translocation of ions across the membrane.</text>
</comment>
<comment type="cofactor">
    <cofactor evidence="1">
        <name>FMN</name>
        <dbReference type="ChEBI" id="CHEBI:58210"/>
    </cofactor>
</comment>
<comment type="subunit">
    <text evidence="1">The complex is composed of six subunits: RnfA, RnfB, RnfC, RnfD, RnfE and RnfG.</text>
</comment>
<comment type="subcellular location">
    <subcellularLocation>
        <location evidence="1">Cell inner membrane</location>
        <topology evidence="1">Single-pass membrane protein</topology>
    </subcellularLocation>
</comment>
<comment type="similarity">
    <text evidence="1">Belongs to the RnfG family.</text>
</comment>
<evidence type="ECO:0000255" key="1">
    <source>
        <dbReference type="HAMAP-Rule" id="MF_00479"/>
    </source>
</evidence>
<name>RNFG_PECAS</name>
<proteinExistence type="inferred from homology"/>